<gene>
    <name evidence="1" type="primary">adk</name>
    <name type="ordered locus">RP638</name>
</gene>
<protein>
    <recommendedName>
        <fullName evidence="1">Adenylate kinase</fullName>
        <shortName evidence="1">AK</shortName>
        <ecNumber evidence="1">2.7.4.3</ecNumber>
    </recommendedName>
    <alternativeName>
        <fullName evidence="1">ATP-AMP transphosphorylase</fullName>
    </alternativeName>
    <alternativeName>
        <fullName evidence="1">ATP:AMP phosphotransferase</fullName>
    </alternativeName>
    <alternativeName>
        <fullName evidence="1">Adenylate monophosphate kinase</fullName>
    </alternativeName>
</protein>
<organism>
    <name type="scientific">Rickettsia prowazekii (strain Madrid E)</name>
    <dbReference type="NCBI Taxonomy" id="272947"/>
    <lineage>
        <taxon>Bacteria</taxon>
        <taxon>Pseudomonadati</taxon>
        <taxon>Pseudomonadota</taxon>
        <taxon>Alphaproteobacteria</taxon>
        <taxon>Rickettsiales</taxon>
        <taxon>Rickettsiaceae</taxon>
        <taxon>Rickettsieae</taxon>
        <taxon>Rickettsia</taxon>
        <taxon>typhus group</taxon>
    </lineage>
</organism>
<evidence type="ECO:0000255" key="1">
    <source>
        <dbReference type="HAMAP-Rule" id="MF_00235"/>
    </source>
</evidence>
<sequence length="213" mass="24504">MIVIFLGPPGAGKGTQGKKIAKKIDLPHIAVGDIFRTIIKTSTSEAELINNYVKQGALIPNEIVNQVIKVFLLSSKYKNGYILDGYPRNLEQAKFFEAFIQKPQIKIIYFDVADELLIKRVLGRYSCKNCGKIYNIHFLQPKIEHVCDVCSSSVFDYRKDDNKEVIKKRIKVYKTETYPLIDYYKNSGNFYIVNANKNEQEIENDIQKILKIN</sequence>
<comment type="function">
    <text evidence="1">Catalyzes the reversible transfer of the terminal phosphate group between ATP and AMP. Plays an important role in cellular energy homeostasis and in adenine nucleotide metabolism.</text>
</comment>
<comment type="catalytic activity">
    <reaction evidence="1">
        <text>AMP + ATP = 2 ADP</text>
        <dbReference type="Rhea" id="RHEA:12973"/>
        <dbReference type="ChEBI" id="CHEBI:30616"/>
        <dbReference type="ChEBI" id="CHEBI:456215"/>
        <dbReference type="ChEBI" id="CHEBI:456216"/>
        <dbReference type="EC" id="2.7.4.3"/>
    </reaction>
</comment>
<comment type="pathway">
    <text evidence="1">Purine metabolism; AMP biosynthesis via salvage pathway; AMP from ADP: step 1/1.</text>
</comment>
<comment type="subunit">
    <text evidence="1">Monomer.</text>
</comment>
<comment type="subcellular location">
    <subcellularLocation>
        <location evidence="1">Cytoplasm</location>
    </subcellularLocation>
</comment>
<comment type="domain">
    <text evidence="1">Consists of three domains, a large central CORE domain and two small peripheral domains, NMPbind and LID, which undergo movements during catalysis. The LID domain closes over the site of phosphoryl transfer upon ATP binding. Assembling and dissambling the active center during each catalytic cycle provides an effective means to prevent ATP hydrolysis. Some bacteria have evolved a zinc-coordinating structure that stabilizes the LID domain.</text>
</comment>
<comment type="similarity">
    <text evidence="1">Belongs to the adenylate kinase family.</text>
</comment>
<name>KAD_RICPR</name>
<accession>Q9ZCS6</accession>
<dbReference type="EC" id="2.7.4.3" evidence="1"/>
<dbReference type="EMBL" id="AJ235272">
    <property type="protein sequence ID" value="CAA15078.1"/>
    <property type="molecule type" value="Genomic_DNA"/>
</dbReference>
<dbReference type="PIR" id="D71669">
    <property type="entry name" value="D71669"/>
</dbReference>
<dbReference type="RefSeq" id="NP_221002.1">
    <property type="nucleotide sequence ID" value="NC_000963.1"/>
</dbReference>
<dbReference type="RefSeq" id="WP_004599187.1">
    <property type="nucleotide sequence ID" value="NC_000963.1"/>
</dbReference>
<dbReference type="SMR" id="Q9ZCS6"/>
<dbReference type="STRING" id="272947.gene:17555715"/>
<dbReference type="EnsemblBacteria" id="CAA15078">
    <property type="protein sequence ID" value="CAA15078"/>
    <property type="gene ID" value="CAA15078"/>
</dbReference>
<dbReference type="KEGG" id="rpr:RP638"/>
<dbReference type="PATRIC" id="fig|272947.5.peg.660"/>
<dbReference type="eggNOG" id="COG0563">
    <property type="taxonomic scope" value="Bacteria"/>
</dbReference>
<dbReference type="HOGENOM" id="CLU_032354_1_2_5"/>
<dbReference type="OrthoDB" id="9805030at2"/>
<dbReference type="UniPathway" id="UPA00588">
    <property type="reaction ID" value="UER00649"/>
</dbReference>
<dbReference type="Proteomes" id="UP000002480">
    <property type="component" value="Chromosome"/>
</dbReference>
<dbReference type="GO" id="GO:0005737">
    <property type="term" value="C:cytoplasm"/>
    <property type="evidence" value="ECO:0007669"/>
    <property type="project" value="UniProtKB-SubCell"/>
</dbReference>
<dbReference type="GO" id="GO:0004017">
    <property type="term" value="F:adenylate kinase activity"/>
    <property type="evidence" value="ECO:0007669"/>
    <property type="project" value="UniProtKB-UniRule"/>
</dbReference>
<dbReference type="GO" id="GO:0005524">
    <property type="term" value="F:ATP binding"/>
    <property type="evidence" value="ECO:0007669"/>
    <property type="project" value="UniProtKB-UniRule"/>
</dbReference>
<dbReference type="GO" id="GO:0008270">
    <property type="term" value="F:zinc ion binding"/>
    <property type="evidence" value="ECO:0007669"/>
    <property type="project" value="UniProtKB-UniRule"/>
</dbReference>
<dbReference type="GO" id="GO:0044209">
    <property type="term" value="P:AMP salvage"/>
    <property type="evidence" value="ECO:0007669"/>
    <property type="project" value="UniProtKB-UniRule"/>
</dbReference>
<dbReference type="CDD" id="cd01428">
    <property type="entry name" value="ADK"/>
    <property type="match status" value="1"/>
</dbReference>
<dbReference type="Gene3D" id="3.40.50.300">
    <property type="entry name" value="P-loop containing nucleotide triphosphate hydrolases"/>
    <property type="match status" value="1"/>
</dbReference>
<dbReference type="HAMAP" id="MF_00235">
    <property type="entry name" value="Adenylate_kinase_Adk"/>
    <property type="match status" value="1"/>
</dbReference>
<dbReference type="InterPro" id="IPR006259">
    <property type="entry name" value="Adenyl_kin_sub"/>
</dbReference>
<dbReference type="InterPro" id="IPR000850">
    <property type="entry name" value="Adenylat/UMP-CMP_kin"/>
</dbReference>
<dbReference type="InterPro" id="IPR033690">
    <property type="entry name" value="Adenylat_kinase_CS"/>
</dbReference>
<dbReference type="InterPro" id="IPR007862">
    <property type="entry name" value="Adenylate_kinase_lid-dom"/>
</dbReference>
<dbReference type="InterPro" id="IPR027417">
    <property type="entry name" value="P-loop_NTPase"/>
</dbReference>
<dbReference type="NCBIfam" id="TIGR01351">
    <property type="entry name" value="adk"/>
    <property type="match status" value="1"/>
</dbReference>
<dbReference type="NCBIfam" id="NF001383">
    <property type="entry name" value="PRK00279.2-1"/>
    <property type="match status" value="1"/>
</dbReference>
<dbReference type="PANTHER" id="PTHR23359">
    <property type="entry name" value="NUCLEOTIDE KINASE"/>
    <property type="match status" value="1"/>
</dbReference>
<dbReference type="Pfam" id="PF00406">
    <property type="entry name" value="ADK"/>
    <property type="match status" value="1"/>
</dbReference>
<dbReference type="Pfam" id="PF05191">
    <property type="entry name" value="ADK_lid"/>
    <property type="match status" value="1"/>
</dbReference>
<dbReference type="PRINTS" id="PR00094">
    <property type="entry name" value="ADENYLTKNASE"/>
</dbReference>
<dbReference type="SUPFAM" id="SSF52540">
    <property type="entry name" value="P-loop containing nucleoside triphosphate hydrolases"/>
    <property type="match status" value="1"/>
</dbReference>
<dbReference type="PROSITE" id="PS00113">
    <property type="entry name" value="ADENYLATE_KINASE"/>
    <property type="match status" value="1"/>
</dbReference>
<feature type="chain" id="PRO_0000158839" description="Adenylate kinase">
    <location>
        <begin position="1"/>
        <end position="213"/>
    </location>
</feature>
<feature type="region of interest" description="NMP" evidence="1">
    <location>
        <begin position="30"/>
        <end position="59"/>
    </location>
</feature>
<feature type="region of interest" description="LID" evidence="1">
    <location>
        <begin position="123"/>
        <end position="161"/>
    </location>
</feature>
<feature type="binding site" evidence="1">
    <location>
        <begin position="10"/>
        <end position="15"/>
    </location>
    <ligand>
        <name>ATP</name>
        <dbReference type="ChEBI" id="CHEBI:30616"/>
    </ligand>
</feature>
<feature type="binding site" evidence="1">
    <location>
        <position position="36"/>
    </location>
    <ligand>
        <name>AMP</name>
        <dbReference type="ChEBI" id="CHEBI:456215"/>
    </ligand>
</feature>
<feature type="binding site" evidence="1">
    <location>
        <begin position="57"/>
        <end position="59"/>
    </location>
    <ligand>
        <name>AMP</name>
        <dbReference type="ChEBI" id="CHEBI:456215"/>
    </ligand>
</feature>
<feature type="binding site" evidence="1">
    <location>
        <begin position="85"/>
        <end position="88"/>
    </location>
    <ligand>
        <name>AMP</name>
        <dbReference type="ChEBI" id="CHEBI:456215"/>
    </ligand>
</feature>
<feature type="binding site" evidence="1">
    <location>
        <position position="92"/>
    </location>
    <ligand>
        <name>AMP</name>
        <dbReference type="ChEBI" id="CHEBI:456215"/>
    </ligand>
</feature>
<feature type="binding site" evidence="1">
    <location>
        <position position="124"/>
    </location>
    <ligand>
        <name>ATP</name>
        <dbReference type="ChEBI" id="CHEBI:30616"/>
    </ligand>
</feature>
<feature type="binding site" evidence="1">
    <location>
        <position position="127"/>
    </location>
    <ligand>
        <name>Zn(2+)</name>
        <dbReference type="ChEBI" id="CHEBI:29105"/>
        <note>structural</note>
    </ligand>
</feature>
<feature type="binding site" evidence="1">
    <location>
        <position position="130"/>
    </location>
    <ligand>
        <name>Zn(2+)</name>
        <dbReference type="ChEBI" id="CHEBI:29105"/>
        <note>structural</note>
    </ligand>
</feature>
<feature type="binding site" evidence="1">
    <location>
        <begin position="133"/>
        <end position="134"/>
    </location>
    <ligand>
        <name>ATP</name>
        <dbReference type="ChEBI" id="CHEBI:30616"/>
    </ligand>
</feature>
<feature type="binding site" evidence="1">
    <location>
        <position position="147"/>
    </location>
    <ligand>
        <name>Zn(2+)</name>
        <dbReference type="ChEBI" id="CHEBI:29105"/>
        <note>structural</note>
    </ligand>
</feature>
<feature type="binding site" evidence="1">
    <location>
        <position position="150"/>
    </location>
    <ligand>
        <name>Zn(2+)</name>
        <dbReference type="ChEBI" id="CHEBI:29105"/>
        <note>structural</note>
    </ligand>
</feature>
<feature type="binding site" evidence="1">
    <location>
        <position position="158"/>
    </location>
    <ligand>
        <name>AMP</name>
        <dbReference type="ChEBI" id="CHEBI:456215"/>
    </ligand>
</feature>
<feature type="binding site" evidence="1">
    <location>
        <position position="169"/>
    </location>
    <ligand>
        <name>AMP</name>
        <dbReference type="ChEBI" id="CHEBI:456215"/>
    </ligand>
</feature>
<feature type="binding site" evidence="1">
    <location>
        <position position="197"/>
    </location>
    <ligand>
        <name>ATP</name>
        <dbReference type="ChEBI" id="CHEBI:30616"/>
    </ligand>
</feature>
<keyword id="KW-0067">ATP-binding</keyword>
<keyword id="KW-0963">Cytoplasm</keyword>
<keyword id="KW-0418">Kinase</keyword>
<keyword id="KW-0479">Metal-binding</keyword>
<keyword id="KW-0545">Nucleotide biosynthesis</keyword>
<keyword id="KW-0547">Nucleotide-binding</keyword>
<keyword id="KW-1185">Reference proteome</keyword>
<keyword id="KW-0808">Transferase</keyword>
<keyword id="KW-0862">Zinc</keyword>
<reference key="1">
    <citation type="journal article" date="1998" name="Nature">
        <title>The genome sequence of Rickettsia prowazekii and the origin of mitochondria.</title>
        <authorList>
            <person name="Andersson S.G.E."/>
            <person name="Zomorodipour A."/>
            <person name="Andersson J.O."/>
            <person name="Sicheritz-Ponten T."/>
            <person name="Alsmark U.C.M."/>
            <person name="Podowski R.M."/>
            <person name="Naeslund A.K."/>
            <person name="Eriksson A.-S."/>
            <person name="Winkler H.H."/>
            <person name="Kurland C.G."/>
        </authorList>
    </citation>
    <scope>NUCLEOTIDE SEQUENCE [LARGE SCALE GENOMIC DNA]</scope>
    <source>
        <strain>Madrid E</strain>
    </source>
</reference>
<proteinExistence type="inferred from homology"/>